<organism>
    <name type="scientific">Mus musculus</name>
    <name type="common">Mouse</name>
    <dbReference type="NCBI Taxonomy" id="10090"/>
    <lineage>
        <taxon>Eukaryota</taxon>
        <taxon>Metazoa</taxon>
        <taxon>Chordata</taxon>
        <taxon>Craniata</taxon>
        <taxon>Vertebrata</taxon>
        <taxon>Euteleostomi</taxon>
        <taxon>Mammalia</taxon>
        <taxon>Eutheria</taxon>
        <taxon>Euarchontoglires</taxon>
        <taxon>Glires</taxon>
        <taxon>Rodentia</taxon>
        <taxon>Myomorpha</taxon>
        <taxon>Muroidea</taxon>
        <taxon>Muridae</taxon>
        <taxon>Murinae</taxon>
        <taxon>Mus</taxon>
        <taxon>Mus</taxon>
    </lineage>
</organism>
<dbReference type="EMBL" id="AJ557514">
    <property type="protein sequence ID" value="CAD89719.1"/>
    <property type="molecule type" value="mRNA"/>
</dbReference>
<dbReference type="EMBL" id="AK035713">
    <property type="protein sequence ID" value="BAC29163.1"/>
    <property type="molecule type" value="mRNA"/>
</dbReference>
<dbReference type="EMBL" id="AK080819">
    <property type="protein sequence ID" value="BAC38034.1"/>
    <property type="molecule type" value="mRNA"/>
</dbReference>
<dbReference type="EMBL" id="BC096024">
    <property type="protein sequence ID" value="AAH96024.2"/>
    <property type="molecule type" value="mRNA"/>
</dbReference>
<dbReference type="EMBL" id="BC138890">
    <property type="protein sequence ID" value="AAI38891.1"/>
    <property type="molecule type" value="mRNA"/>
</dbReference>
<dbReference type="CCDS" id="CCDS37455.1"/>
<dbReference type="RefSeq" id="NP_001359188.1">
    <property type="nucleotide sequence ID" value="NM_001372259.1"/>
</dbReference>
<dbReference type="RefSeq" id="NP_848730.2">
    <property type="nucleotide sequence ID" value="NM_178615.3"/>
</dbReference>
<dbReference type="RefSeq" id="XP_006524928.1">
    <property type="nucleotide sequence ID" value="XM_006524865.2"/>
</dbReference>
<dbReference type="SMR" id="Q7TQ33"/>
<dbReference type="FunCoup" id="Q7TQ33">
    <property type="interactions" value="1803"/>
</dbReference>
<dbReference type="STRING" id="10090.ENSMUSP00000126177"/>
<dbReference type="GlyCosmos" id="Q7TQ33">
    <property type="glycosylation" value="2 sites, No reported glycans"/>
</dbReference>
<dbReference type="GlyGen" id="Q7TQ33">
    <property type="glycosylation" value="3 sites"/>
</dbReference>
<dbReference type="iPTMnet" id="Q7TQ33"/>
<dbReference type="PhosphoSitePlus" id="Q7TQ33"/>
<dbReference type="PaxDb" id="10090-ENSMUSP00000126177"/>
<dbReference type="PeptideAtlas" id="Q7TQ33"/>
<dbReference type="ProteomicsDB" id="255249"/>
<dbReference type="Antibodypedia" id="2207">
    <property type="antibodies" value="212 antibodies from 30 providers"/>
</dbReference>
<dbReference type="DNASU" id="68799"/>
<dbReference type="Ensembl" id="ENSMUST00000170578.3">
    <property type="protein sequence ID" value="ENSMUSP00000126177.2"/>
    <property type="gene ID" value="ENSMUSG00000048027.10"/>
</dbReference>
<dbReference type="GeneID" id="68799"/>
<dbReference type="KEGG" id="mmu:68799"/>
<dbReference type="UCSC" id="uc008aow.1">
    <property type="organism name" value="mouse"/>
</dbReference>
<dbReference type="AGR" id="MGI:1916049"/>
<dbReference type="CTD" id="285704"/>
<dbReference type="MGI" id="MGI:1916049">
    <property type="gene designation" value="Rgmb"/>
</dbReference>
<dbReference type="VEuPathDB" id="HostDB:ENSMUSG00000048027"/>
<dbReference type="eggNOG" id="ENOG502QSTJ">
    <property type="taxonomic scope" value="Eukaryota"/>
</dbReference>
<dbReference type="GeneTree" id="ENSGT00950000183112"/>
<dbReference type="HOGENOM" id="CLU_032775_1_1_1"/>
<dbReference type="InParanoid" id="Q7TQ33"/>
<dbReference type="OMA" id="CHEKMLV"/>
<dbReference type="OrthoDB" id="10013795at2759"/>
<dbReference type="PhylomeDB" id="Q7TQ33"/>
<dbReference type="TreeFam" id="TF329836"/>
<dbReference type="BioGRID-ORCS" id="68799">
    <property type="hits" value="10 hits in 78 CRISPR screens"/>
</dbReference>
<dbReference type="ChiTaRS" id="Rgmb">
    <property type="organism name" value="mouse"/>
</dbReference>
<dbReference type="PRO" id="PR:Q7TQ33"/>
<dbReference type="Proteomes" id="UP000000589">
    <property type="component" value="Chromosome 17"/>
</dbReference>
<dbReference type="RNAct" id="Q7TQ33">
    <property type="molecule type" value="protein"/>
</dbReference>
<dbReference type="Bgee" id="ENSMUSG00000048027">
    <property type="expression patterns" value="Expressed in rostral migratory stream and 288 other cell types or tissues"/>
</dbReference>
<dbReference type="ExpressionAtlas" id="Q7TQ33">
    <property type="expression patterns" value="baseline and differential"/>
</dbReference>
<dbReference type="GO" id="GO:0005793">
    <property type="term" value="C:endoplasmic reticulum-Golgi intermediate compartment"/>
    <property type="evidence" value="ECO:0000314"/>
    <property type="project" value="MGI"/>
</dbReference>
<dbReference type="GO" id="GO:0045121">
    <property type="term" value="C:membrane raft"/>
    <property type="evidence" value="ECO:0007669"/>
    <property type="project" value="UniProtKB-SubCell"/>
</dbReference>
<dbReference type="GO" id="GO:0005886">
    <property type="term" value="C:plasma membrane"/>
    <property type="evidence" value="ECO:0000314"/>
    <property type="project" value="MGI"/>
</dbReference>
<dbReference type="GO" id="GO:0098552">
    <property type="term" value="C:side of membrane"/>
    <property type="evidence" value="ECO:0007669"/>
    <property type="project" value="UniProtKB-KW"/>
</dbReference>
<dbReference type="GO" id="GO:0042802">
    <property type="term" value="F:identical protein binding"/>
    <property type="evidence" value="ECO:0000314"/>
    <property type="project" value="MGI"/>
</dbReference>
<dbReference type="GO" id="GO:0030509">
    <property type="term" value="P:BMP signaling pathway"/>
    <property type="evidence" value="ECO:0000314"/>
    <property type="project" value="MGI"/>
</dbReference>
<dbReference type="GO" id="GO:0007155">
    <property type="term" value="P:cell adhesion"/>
    <property type="evidence" value="ECO:0000314"/>
    <property type="project" value="MGI"/>
</dbReference>
<dbReference type="GO" id="GO:0045893">
    <property type="term" value="P:positive regulation of DNA-templated transcription"/>
    <property type="evidence" value="ECO:0000314"/>
    <property type="project" value="HGNC-UCL"/>
</dbReference>
<dbReference type="GO" id="GO:0007165">
    <property type="term" value="P:signal transduction"/>
    <property type="evidence" value="ECO:0000314"/>
    <property type="project" value="HGNC-UCL"/>
</dbReference>
<dbReference type="FunFam" id="3.40.1000.10:FF:000001">
    <property type="entry name" value="Repulsive guidance molecule BMP co-receptor a"/>
    <property type="match status" value="1"/>
</dbReference>
<dbReference type="Gene3D" id="3.40.1000.10">
    <property type="entry name" value="Mog1/PsbP, alpha/beta/alpha sandwich"/>
    <property type="match status" value="1"/>
</dbReference>
<dbReference type="InterPro" id="IPR040287">
    <property type="entry name" value="RGM"/>
</dbReference>
<dbReference type="InterPro" id="IPR009496">
    <property type="entry name" value="RGM_C"/>
</dbReference>
<dbReference type="InterPro" id="IPR010536">
    <property type="entry name" value="RGM_N"/>
</dbReference>
<dbReference type="PANTHER" id="PTHR31428:SF5">
    <property type="entry name" value="REPULSIVE GUIDANCE MOLECULE B"/>
    <property type="match status" value="1"/>
</dbReference>
<dbReference type="PANTHER" id="PTHR31428">
    <property type="entry name" value="RGM DOMAIN FAMILY MEMBER DRAG-1"/>
    <property type="match status" value="1"/>
</dbReference>
<dbReference type="Pfam" id="PF06534">
    <property type="entry name" value="RGM_C"/>
    <property type="match status" value="1"/>
</dbReference>
<dbReference type="Pfam" id="PF06535">
    <property type="entry name" value="RGM_N"/>
    <property type="match status" value="1"/>
</dbReference>
<reference key="1">
    <citation type="journal article" date="2004" name="Gene Expr. Patterns">
        <title>Isolation and expression pattern of three mouse homologues of chick Rgm.</title>
        <authorList>
            <person name="Schmidtmer J."/>
            <person name="Engelkamp D."/>
        </authorList>
    </citation>
    <scope>NUCLEOTIDE SEQUENCE [MRNA]</scope>
    <scope>DEVELOPMENTAL STAGE</scope>
</reference>
<reference key="2">
    <citation type="journal article" date="2005" name="Science">
        <title>The transcriptional landscape of the mammalian genome.</title>
        <authorList>
            <person name="Carninci P."/>
            <person name="Kasukawa T."/>
            <person name="Katayama S."/>
            <person name="Gough J."/>
            <person name="Frith M.C."/>
            <person name="Maeda N."/>
            <person name="Oyama R."/>
            <person name="Ravasi T."/>
            <person name="Lenhard B."/>
            <person name="Wells C."/>
            <person name="Kodzius R."/>
            <person name="Shimokawa K."/>
            <person name="Bajic V.B."/>
            <person name="Brenner S.E."/>
            <person name="Batalov S."/>
            <person name="Forrest A.R."/>
            <person name="Zavolan M."/>
            <person name="Davis M.J."/>
            <person name="Wilming L.G."/>
            <person name="Aidinis V."/>
            <person name="Allen J.E."/>
            <person name="Ambesi-Impiombato A."/>
            <person name="Apweiler R."/>
            <person name="Aturaliya R.N."/>
            <person name="Bailey T.L."/>
            <person name="Bansal M."/>
            <person name="Baxter L."/>
            <person name="Beisel K.W."/>
            <person name="Bersano T."/>
            <person name="Bono H."/>
            <person name="Chalk A.M."/>
            <person name="Chiu K.P."/>
            <person name="Choudhary V."/>
            <person name="Christoffels A."/>
            <person name="Clutterbuck D.R."/>
            <person name="Crowe M.L."/>
            <person name="Dalla E."/>
            <person name="Dalrymple B.P."/>
            <person name="de Bono B."/>
            <person name="Della Gatta G."/>
            <person name="di Bernardo D."/>
            <person name="Down T."/>
            <person name="Engstrom P."/>
            <person name="Fagiolini M."/>
            <person name="Faulkner G."/>
            <person name="Fletcher C.F."/>
            <person name="Fukushima T."/>
            <person name="Furuno M."/>
            <person name="Futaki S."/>
            <person name="Gariboldi M."/>
            <person name="Georgii-Hemming P."/>
            <person name="Gingeras T.R."/>
            <person name="Gojobori T."/>
            <person name="Green R.E."/>
            <person name="Gustincich S."/>
            <person name="Harbers M."/>
            <person name="Hayashi Y."/>
            <person name="Hensch T.K."/>
            <person name="Hirokawa N."/>
            <person name="Hill D."/>
            <person name="Huminiecki L."/>
            <person name="Iacono M."/>
            <person name="Ikeo K."/>
            <person name="Iwama A."/>
            <person name="Ishikawa T."/>
            <person name="Jakt M."/>
            <person name="Kanapin A."/>
            <person name="Katoh M."/>
            <person name="Kawasawa Y."/>
            <person name="Kelso J."/>
            <person name="Kitamura H."/>
            <person name="Kitano H."/>
            <person name="Kollias G."/>
            <person name="Krishnan S.P."/>
            <person name="Kruger A."/>
            <person name="Kummerfeld S.K."/>
            <person name="Kurochkin I.V."/>
            <person name="Lareau L.F."/>
            <person name="Lazarevic D."/>
            <person name="Lipovich L."/>
            <person name="Liu J."/>
            <person name="Liuni S."/>
            <person name="McWilliam S."/>
            <person name="Madan Babu M."/>
            <person name="Madera M."/>
            <person name="Marchionni L."/>
            <person name="Matsuda H."/>
            <person name="Matsuzawa S."/>
            <person name="Miki H."/>
            <person name="Mignone F."/>
            <person name="Miyake S."/>
            <person name="Morris K."/>
            <person name="Mottagui-Tabar S."/>
            <person name="Mulder N."/>
            <person name="Nakano N."/>
            <person name="Nakauchi H."/>
            <person name="Ng P."/>
            <person name="Nilsson R."/>
            <person name="Nishiguchi S."/>
            <person name="Nishikawa S."/>
            <person name="Nori F."/>
            <person name="Ohara O."/>
            <person name="Okazaki Y."/>
            <person name="Orlando V."/>
            <person name="Pang K.C."/>
            <person name="Pavan W.J."/>
            <person name="Pavesi G."/>
            <person name="Pesole G."/>
            <person name="Petrovsky N."/>
            <person name="Piazza S."/>
            <person name="Reed J."/>
            <person name="Reid J.F."/>
            <person name="Ring B.Z."/>
            <person name="Ringwald M."/>
            <person name="Rost B."/>
            <person name="Ruan Y."/>
            <person name="Salzberg S.L."/>
            <person name="Sandelin A."/>
            <person name="Schneider C."/>
            <person name="Schoenbach C."/>
            <person name="Sekiguchi K."/>
            <person name="Semple C.A."/>
            <person name="Seno S."/>
            <person name="Sessa L."/>
            <person name="Sheng Y."/>
            <person name="Shibata Y."/>
            <person name="Shimada H."/>
            <person name="Shimada K."/>
            <person name="Silva D."/>
            <person name="Sinclair B."/>
            <person name="Sperling S."/>
            <person name="Stupka E."/>
            <person name="Sugiura K."/>
            <person name="Sultana R."/>
            <person name="Takenaka Y."/>
            <person name="Taki K."/>
            <person name="Tammoja K."/>
            <person name="Tan S.L."/>
            <person name="Tang S."/>
            <person name="Taylor M.S."/>
            <person name="Tegner J."/>
            <person name="Teichmann S.A."/>
            <person name="Ueda H.R."/>
            <person name="van Nimwegen E."/>
            <person name="Verardo R."/>
            <person name="Wei C.L."/>
            <person name="Yagi K."/>
            <person name="Yamanishi H."/>
            <person name="Zabarovsky E."/>
            <person name="Zhu S."/>
            <person name="Zimmer A."/>
            <person name="Hide W."/>
            <person name="Bult C."/>
            <person name="Grimmond S.M."/>
            <person name="Teasdale R.D."/>
            <person name="Liu E.T."/>
            <person name="Brusic V."/>
            <person name="Quackenbush J."/>
            <person name="Wahlestedt C."/>
            <person name="Mattick J.S."/>
            <person name="Hume D.A."/>
            <person name="Kai C."/>
            <person name="Sasaki D."/>
            <person name="Tomaru Y."/>
            <person name="Fukuda S."/>
            <person name="Kanamori-Katayama M."/>
            <person name="Suzuki M."/>
            <person name="Aoki J."/>
            <person name="Arakawa T."/>
            <person name="Iida J."/>
            <person name="Imamura K."/>
            <person name="Itoh M."/>
            <person name="Kato T."/>
            <person name="Kawaji H."/>
            <person name="Kawagashira N."/>
            <person name="Kawashima T."/>
            <person name="Kojima M."/>
            <person name="Kondo S."/>
            <person name="Konno H."/>
            <person name="Nakano K."/>
            <person name="Ninomiya N."/>
            <person name="Nishio T."/>
            <person name="Okada M."/>
            <person name="Plessy C."/>
            <person name="Shibata K."/>
            <person name="Shiraki T."/>
            <person name="Suzuki S."/>
            <person name="Tagami M."/>
            <person name="Waki K."/>
            <person name="Watahiki A."/>
            <person name="Okamura-Oho Y."/>
            <person name="Suzuki H."/>
            <person name="Kawai J."/>
            <person name="Hayashizaki Y."/>
        </authorList>
    </citation>
    <scope>NUCLEOTIDE SEQUENCE [LARGE SCALE MRNA]</scope>
    <source>
        <strain>C57BL/6J</strain>
        <tissue>Corpora quadrigemina</tissue>
        <tissue>Urinary bladder</tissue>
    </source>
</reference>
<reference key="3">
    <citation type="journal article" date="2004" name="Genome Res.">
        <title>The status, quality, and expansion of the NIH full-length cDNA project: the Mammalian Gene Collection (MGC).</title>
        <authorList>
            <consortium name="The MGC Project Team"/>
        </authorList>
    </citation>
    <scope>NUCLEOTIDE SEQUENCE [LARGE SCALE MRNA]</scope>
    <source>
        <strain>C57BL/6J</strain>
        <tissue>Brain</tissue>
    </source>
</reference>
<reference key="4">
    <citation type="journal article" date="2004" name="Gene Expr. Patterns">
        <title>Expression pattern of the repulsive guidance molecules RGM A, B and C during mouse development.</title>
        <authorList>
            <person name="Oldekamp J."/>
            <person name="Kraemer N."/>
            <person name="Alvarez-Bolado G."/>
            <person name="Skutella T."/>
        </authorList>
    </citation>
    <scope>DEVELOPMENTAL STAGE</scope>
</reference>
<reference key="5">
    <citation type="journal article" date="2004" name="J. Neurosci.">
        <title>Repulsive guidance molecule (RGM) gene function is required for neural tube closure but not retinal topography in the mouse visual system.</title>
        <authorList>
            <person name="Niederkofler V."/>
            <person name="Salie R."/>
            <person name="Sigrist M."/>
            <person name="Arber S."/>
        </authorList>
    </citation>
    <scope>DEVELOPMENTAL STAGE</scope>
</reference>
<reference key="6">
    <citation type="journal article" date="2004" name="J. Neurosci.">
        <title>DRAGON: a member of the repulsive guidance molecule-related family of neuronal- and muscle-expressed membrane proteins is regulated by DRG11 and has neuronal adhesive properties.</title>
        <authorList>
            <person name="Samad T.A."/>
            <person name="Srinivasan A."/>
            <person name="Karchewski L.A."/>
            <person name="Jeong S.-J."/>
            <person name="Campagna J.A."/>
            <person name="Ji R.-R."/>
            <person name="Fabrizio D.A."/>
            <person name="Zhang Y."/>
            <person name="Lin H.Y."/>
            <person name="Bell E."/>
            <person name="Woolf C.J."/>
        </authorList>
    </citation>
    <scope>FUNCTION</scope>
    <scope>SUBUNIT</scope>
    <scope>INTERACTION WITH DRGX</scope>
    <scope>TISSUE SPECIFICITY</scope>
    <scope>DEVELOPMENTAL STAGE</scope>
    <scope>GPI-ANCHOR</scope>
</reference>
<reference key="7">
    <citation type="journal article" date="2005" name="Endocrinology">
        <title>Localization and action of Dragon (repulsive guidance molecule b), a novel bone morphogenetic protein coreceptor, throughout the reproductive axis.</title>
        <authorList>
            <person name="Xia Y."/>
            <person name="Sidis Y."/>
            <person name="Mukherjee A."/>
            <person name="Samad T.A."/>
            <person name="Brenner G."/>
            <person name="Woolf C.J."/>
            <person name="Lin H.Y."/>
            <person name="Schneyer A."/>
        </authorList>
    </citation>
    <scope>FUNCTION</scope>
    <scope>SUBCELLULAR LOCATION</scope>
    <scope>TISSUE SPECIFICITY</scope>
</reference>
<reference key="8">
    <citation type="journal article" date="2005" name="J. Biol. Chem.">
        <title>DRAGON, a bone morphogenetic protein co-receptor.</title>
        <authorList>
            <person name="Samad T.A."/>
            <person name="Rebbapragada A."/>
            <person name="Bell E."/>
            <person name="Zhang Y."/>
            <person name="Sidis Y."/>
            <person name="Jeong S.-J."/>
            <person name="Campagna J.A."/>
            <person name="Perusini S."/>
            <person name="Fabrizio D.A."/>
            <person name="Schneyer A.L."/>
            <person name="Lin H.Y."/>
            <person name="Brivanlou A.H."/>
            <person name="Attisano L."/>
            <person name="Woolf C.J."/>
        </authorList>
    </citation>
    <scope>FUNCTION</scope>
    <scope>INTERACTION WITH ACVR1; ACVR2B; BMP2; BMP4; BMPR1A AND BMPR1B</scope>
    <scope>DEVELOPMENTAL STAGE</scope>
</reference>
<accession>Q7TQ33</accession>
<accession>Q501K0</accession>
<accession>Q8BNR6</accession>
<accession>Q8CBM7</accession>
<comment type="function">
    <text evidence="1 5 7 8">Member of the repulsive guidance molecule (RGM) family that contributes to the patterning of the developing nervous system. Acts as a bone morphogenetic protein (BMP) coreceptor that potentiates BMP signaling. Promotes neuronal adhesion. May inhibit neurite outgrowth (By similarity).</text>
</comment>
<comment type="subunit">
    <text evidence="5 7">Homooligomer. Interacts with DRGX. Interacts with BMP2 and BMP4. Interacts with the BMP type I receptors ACVR1, BMPR1A and BMPR1B and with the BMP type II receptor ACVR2B. The functional complex with its receptor NEO1/neogenin appears to be a heterotetramer with a 2:2 stoichiometry, RGM molecules acting as staples that bring two NEO1 receptors together without interacting themselves, this arrangement leads to activation of downstream signaling via RhoA.</text>
</comment>
<comment type="subcellular location">
    <subcellularLocation>
        <location evidence="8">Cell membrane</location>
        <topology evidence="8">Lipid-anchor</topology>
        <topology evidence="8">GPI-anchor</topology>
    </subcellularLocation>
    <subcellularLocation>
        <location evidence="8">Membrane raft</location>
    </subcellularLocation>
</comment>
<comment type="tissue specificity">
    <text evidence="5 8">Detected in neonatal and adult dorsal root ganglion sensory neurons, spinal cord, and brain (at protein level). Also expressed at high levels in retinal ganglion cells of developing mouse, extending to the optic nerve (at protein level). Expressed in testis, epididymis, ovary, uterus, and pituitary.</text>
</comment>
<comment type="developmental stage">
    <text evidence="3 4 5 6 7">Expressed in the developing nervous system. Expression is restricted to a subset of individual neurons in the mid- and hindbrain regions. At 10.5 dpc, expression level increases and extends further into the forebrain. The segmented pattern of expression becomes more refined and is indicative of peripheral nervous system labelling. Not detected in the area of motoneuron differentiation. Expression could be restricted to postmitotic neurons. Also expressed in fetal dorsal root ganglion, dorsal horn, in the dorsomedial mantle layer of the spinal cord, alar plate of the myelencephalon, marginal layer of the mesencephalon, basal plate of the pons, and cerebellar primordia, as well as the cortex of the olfactory lobe, retina, and olfactory epithelium. In the developing eye, expressed in differentiating ganglion cells and later in the development, also in amacrine cells. In adult, expressed in scattered cells throughout the brain.</text>
</comment>
<comment type="PTM">
    <text evidence="5">GPI-anchored.</text>
</comment>
<comment type="PTM">
    <text evidence="1">Autocatalytically cleaved at low pH; the two chains remain linked via two disulfide bonds.</text>
</comment>
<comment type="similarity">
    <text evidence="11">Belongs to the repulsive guidance molecule (RGM) family.</text>
</comment>
<evidence type="ECO:0000250" key="1">
    <source>
        <dbReference type="UniProtKB" id="Q6NW40"/>
    </source>
</evidence>
<evidence type="ECO:0000255" key="2"/>
<evidence type="ECO:0000269" key="3">
    <source>
    </source>
</evidence>
<evidence type="ECO:0000269" key="4">
    <source>
    </source>
</evidence>
<evidence type="ECO:0000269" key="5">
    <source>
    </source>
</evidence>
<evidence type="ECO:0000269" key="6">
    <source>
    </source>
</evidence>
<evidence type="ECO:0000269" key="7">
    <source>
    </source>
</evidence>
<evidence type="ECO:0000269" key="8">
    <source>
    </source>
</evidence>
<evidence type="ECO:0000303" key="9">
    <source>
    </source>
</evidence>
<evidence type="ECO:0000303" key="10">
    <source>
    </source>
</evidence>
<evidence type="ECO:0000305" key="11"/>
<evidence type="ECO:0000312" key="12">
    <source>
        <dbReference type="MGI" id="MGI:1916049"/>
    </source>
</evidence>
<protein>
    <recommendedName>
        <fullName evidence="10">Repulsive guidance molecule B</fullName>
    </recommendedName>
    <alternativeName>
        <fullName evidence="9">DRG11-responsive axonal guidance and outgrowth of neurite</fullName>
        <shortName evidence="9">DRAGON</shortName>
    </alternativeName>
</protein>
<gene>
    <name evidence="10 12" type="primary">Rgmb</name>
</gene>
<keyword id="KW-0068">Autocatalytic cleavage</keyword>
<keyword id="KW-1003">Cell membrane</keyword>
<keyword id="KW-1015">Disulfide bond</keyword>
<keyword id="KW-0325">Glycoprotein</keyword>
<keyword id="KW-0336">GPI-anchor</keyword>
<keyword id="KW-0449">Lipoprotein</keyword>
<keyword id="KW-0472">Membrane</keyword>
<keyword id="KW-1185">Reference proteome</keyword>
<keyword id="KW-0732">Signal</keyword>
<sequence length="436" mass="47181">MGVRAAPSCAAAPAAAGAEQSRRPGLWPPSPPPPLLLLLLLSLGLLHAGDCQQPTQCRIQKCTTDFVALTAHLNSAADGFDSEFCKALRAYAGCTQRTSKACRGNLVYHSAVLGISDLMSQRNCSKDGPTSSTNPEVTHDPCNYHSHGGVREHGGGDQRPPNYLFCGLFGDPHLRTFKDHFQTCKVEGAWPLIDNNYLSVQVTNVPVVPGSSATATNKVTIIFKAQHECTDQKVYQAVTDDLPAAFVDGTTSGGDGDVKSLHIVEKESGRYVEMHARYIGTTVFVRQLGRYLTLAIRMPEDLAMSYEESQDLQLCVNGCPMSECIDDGQGQVSAILGHSLPHTTSVQAWPGYTLETASTQCHEKMPVKDIYFQSCVFDLLTTGDANFTAAAHSALEDVEALHPRKERWHIFPSSCGGCRDLPVGLGLTCLILIMFL</sequence>
<proteinExistence type="evidence at protein level"/>
<feature type="signal peptide" evidence="2">
    <location>
        <begin position="1"/>
        <end position="48"/>
    </location>
</feature>
<feature type="chain" id="PRO_0000030396" description="Repulsive guidance molecule B">
    <location>
        <begin position="49"/>
        <end position="415"/>
    </location>
</feature>
<feature type="propeptide" id="PRO_0000030397" description="Removed in mature form" evidence="2">
    <location>
        <begin position="416"/>
        <end position="436"/>
    </location>
</feature>
<feature type="site" description="Cleavage; by autolysis" evidence="1">
    <location>
        <begin position="171"/>
        <end position="172"/>
    </location>
</feature>
<feature type="lipid moiety-binding region" description="GPI-anchor amidated cysteine" evidence="2">
    <location>
        <position position="415"/>
    </location>
</feature>
<feature type="glycosylation site" description="N-linked (GlcNAc...) asparagine" evidence="2">
    <location>
        <position position="123"/>
    </location>
</feature>
<feature type="glycosylation site" description="N-linked (GlcNAc...) asparagine" evidence="2">
    <location>
        <position position="386"/>
    </location>
</feature>
<feature type="disulfide bond" evidence="1">
    <location>
        <begin position="142"/>
        <end position="229"/>
    </location>
</feature>
<feature type="disulfide bond" evidence="1">
    <location>
        <begin position="166"/>
        <end position="315"/>
    </location>
</feature>
<feature type="sequence conflict" description="In Ref. 2; BAC38034." evidence="11" ref="2">
    <original>S</original>
    <variation>Y</variation>
    <location>
        <position position="8"/>
    </location>
</feature>
<feature type="sequence conflict" description="In Ref. 2; BAC38034." evidence="11" ref="2">
    <original>A</original>
    <variation>G</variation>
    <location>
        <position position="12"/>
    </location>
</feature>
<feature type="sequence conflict" description="In Ref. 2; BAC38034." evidence="11" ref="2">
    <original>A</original>
    <variation>G</variation>
    <location>
        <position position="15"/>
    </location>
</feature>
<feature type="sequence conflict" description="In Ref. 2; BAC38034." evidence="11" ref="2">
    <original>G</original>
    <variation>R</variation>
    <location>
        <position position="25"/>
    </location>
</feature>
<feature type="sequence conflict" description="In Ref. 2; BAC38034." evidence="11" ref="2">
    <original>S</original>
    <variation>T</variation>
    <location>
        <position position="30"/>
    </location>
</feature>
<feature type="sequence conflict" description="In Ref. 2; BAC29163." evidence="11" ref="2">
    <original>P</original>
    <variation>T</variation>
    <location>
        <position position="141"/>
    </location>
</feature>
<feature type="sequence conflict" description="In Ref. 2; BAC29163." evidence="11" ref="2">
    <original>E</original>
    <variation>K</variation>
    <location>
        <position position="300"/>
    </location>
</feature>
<name>RGMB_MOUSE</name>